<protein>
    <recommendedName>
        <fullName evidence="1">Gamma-glutamyl phosphate reductase</fullName>
        <shortName evidence="1">GPR</shortName>
        <ecNumber evidence="1">1.2.1.41</ecNumber>
    </recommendedName>
    <alternativeName>
        <fullName evidence="1">Glutamate-5-semialdehyde dehydrogenase</fullName>
    </alternativeName>
    <alternativeName>
        <fullName evidence="1">Glutamyl-gamma-semialdehyde dehydrogenase</fullName>
        <shortName evidence="1">GSA dehydrogenase</shortName>
    </alternativeName>
</protein>
<name>PROA_RHIR8</name>
<organism>
    <name type="scientific">Rhizobium rhizogenes (strain K84 / ATCC BAA-868)</name>
    <name type="common">Agrobacterium radiobacter</name>
    <dbReference type="NCBI Taxonomy" id="311403"/>
    <lineage>
        <taxon>Bacteria</taxon>
        <taxon>Pseudomonadati</taxon>
        <taxon>Pseudomonadota</taxon>
        <taxon>Alphaproteobacteria</taxon>
        <taxon>Hyphomicrobiales</taxon>
        <taxon>Rhizobiaceae</taxon>
        <taxon>Rhizobium/Agrobacterium group</taxon>
        <taxon>Rhizobium</taxon>
    </lineage>
</organism>
<gene>
    <name evidence="1" type="primary">proA</name>
    <name type="ordered locus">Arad_4878</name>
</gene>
<keyword id="KW-0028">Amino-acid biosynthesis</keyword>
<keyword id="KW-0963">Cytoplasm</keyword>
<keyword id="KW-0521">NADP</keyword>
<keyword id="KW-0560">Oxidoreductase</keyword>
<keyword id="KW-0641">Proline biosynthesis</keyword>
<evidence type="ECO:0000255" key="1">
    <source>
        <dbReference type="HAMAP-Rule" id="MF_00412"/>
    </source>
</evidence>
<dbReference type="EC" id="1.2.1.41" evidence="1"/>
<dbReference type="EMBL" id="CP000628">
    <property type="protein sequence ID" value="ACM28482.1"/>
    <property type="molecule type" value="Genomic_DNA"/>
</dbReference>
<dbReference type="RefSeq" id="WP_012652974.1">
    <property type="nucleotide sequence ID" value="NC_011985.1"/>
</dbReference>
<dbReference type="SMR" id="B9JER3"/>
<dbReference type="STRING" id="311403.Arad_4878"/>
<dbReference type="KEGG" id="ara:Arad_4878"/>
<dbReference type="eggNOG" id="COG0014">
    <property type="taxonomic scope" value="Bacteria"/>
</dbReference>
<dbReference type="HOGENOM" id="CLU_030231_0_0_5"/>
<dbReference type="UniPathway" id="UPA00098">
    <property type="reaction ID" value="UER00360"/>
</dbReference>
<dbReference type="Proteomes" id="UP000001600">
    <property type="component" value="Chromosome 1"/>
</dbReference>
<dbReference type="GO" id="GO:0005737">
    <property type="term" value="C:cytoplasm"/>
    <property type="evidence" value="ECO:0007669"/>
    <property type="project" value="UniProtKB-SubCell"/>
</dbReference>
<dbReference type="GO" id="GO:0004350">
    <property type="term" value="F:glutamate-5-semialdehyde dehydrogenase activity"/>
    <property type="evidence" value="ECO:0007669"/>
    <property type="project" value="UniProtKB-UniRule"/>
</dbReference>
<dbReference type="GO" id="GO:0050661">
    <property type="term" value="F:NADP binding"/>
    <property type="evidence" value="ECO:0007669"/>
    <property type="project" value="InterPro"/>
</dbReference>
<dbReference type="GO" id="GO:0055129">
    <property type="term" value="P:L-proline biosynthetic process"/>
    <property type="evidence" value="ECO:0007669"/>
    <property type="project" value="UniProtKB-UniRule"/>
</dbReference>
<dbReference type="CDD" id="cd07079">
    <property type="entry name" value="ALDH_F18-19_ProA-GPR"/>
    <property type="match status" value="1"/>
</dbReference>
<dbReference type="Gene3D" id="3.40.605.10">
    <property type="entry name" value="Aldehyde Dehydrogenase, Chain A, domain 1"/>
    <property type="match status" value="1"/>
</dbReference>
<dbReference type="Gene3D" id="3.40.309.10">
    <property type="entry name" value="Aldehyde Dehydrogenase, Chain A, domain 2"/>
    <property type="match status" value="1"/>
</dbReference>
<dbReference type="HAMAP" id="MF_00412">
    <property type="entry name" value="ProA"/>
    <property type="match status" value="1"/>
</dbReference>
<dbReference type="InterPro" id="IPR016161">
    <property type="entry name" value="Ald_DH/histidinol_DH"/>
</dbReference>
<dbReference type="InterPro" id="IPR016163">
    <property type="entry name" value="Ald_DH_C"/>
</dbReference>
<dbReference type="InterPro" id="IPR016162">
    <property type="entry name" value="Ald_DH_N"/>
</dbReference>
<dbReference type="InterPro" id="IPR015590">
    <property type="entry name" value="Aldehyde_DH_dom"/>
</dbReference>
<dbReference type="InterPro" id="IPR020593">
    <property type="entry name" value="G-glutamylP_reductase_CS"/>
</dbReference>
<dbReference type="InterPro" id="IPR012134">
    <property type="entry name" value="Glu-5-SA_DH"/>
</dbReference>
<dbReference type="InterPro" id="IPR000965">
    <property type="entry name" value="GPR_dom"/>
</dbReference>
<dbReference type="NCBIfam" id="NF001221">
    <property type="entry name" value="PRK00197.1"/>
    <property type="match status" value="1"/>
</dbReference>
<dbReference type="NCBIfam" id="TIGR00407">
    <property type="entry name" value="proA"/>
    <property type="match status" value="1"/>
</dbReference>
<dbReference type="PANTHER" id="PTHR11063:SF8">
    <property type="entry name" value="DELTA-1-PYRROLINE-5-CARBOXYLATE SYNTHASE"/>
    <property type="match status" value="1"/>
</dbReference>
<dbReference type="PANTHER" id="PTHR11063">
    <property type="entry name" value="GLUTAMATE SEMIALDEHYDE DEHYDROGENASE"/>
    <property type="match status" value="1"/>
</dbReference>
<dbReference type="Pfam" id="PF00171">
    <property type="entry name" value="Aldedh"/>
    <property type="match status" value="1"/>
</dbReference>
<dbReference type="PIRSF" id="PIRSF000151">
    <property type="entry name" value="GPR"/>
    <property type="match status" value="1"/>
</dbReference>
<dbReference type="SUPFAM" id="SSF53720">
    <property type="entry name" value="ALDH-like"/>
    <property type="match status" value="1"/>
</dbReference>
<dbReference type="PROSITE" id="PS01223">
    <property type="entry name" value="PROA"/>
    <property type="match status" value="1"/>
</dbReference>
<accession>B9JER3</accession>
<sequence>MLDTVAQSPDIDALMNDIGRKARAASRPLAFASTESKNRALAAMADAILARKDHILAENAKDLKDVEGTDILASFVDRLTLTEKRVAEMAEGIRAIAALPDPVGEVFAAWDRPNGLKIERVRTPLGVIGVIFESRPNVTADAGALCLKAGNAVILRCGSDSRRSSQAILECLVEGLKAAGLPEHAIQLVPVTDRAAVGAMLRGLEGTIDVIVPRGGKSLVARVQSEARVPVFAHLEGLCHVYIDASADLDMAKAIVVNAKMRRTGICGSAETLLVDAKAAQTHLKPLLDGLTEAGCEIRASTEVLRLVPGLKTATEEDWSTEYLDAIISVTIVDGISGAIDHISRYSSNHTEAVIAEDPAVVERFFTEIDSAILLHNASTQFADGGEFGMGAEIGIATGKMHARGPVGVEQLTSFKYRVHGTGQIRP</sequence>
<feature type="chain" id="PRO_1000193561" description="Gamma-glutamyl phosphate reductase">
    <location>
        <begin position="1"/>
        <end position="427"/>
    </location>
</feature>
<proteinExistence type="inferred from homology"/>
<reference key="1">
    <citation type="journal article" date="2009" name="J. Bacteriol.">
        <title>Genome sequences of three Agrobacterium biovars help elucidate the evolution of multichromosome genomes in bacteria.</title>
        <authorList>
            <person name="Slater S.C."/>
            <person name="Goldman B.S."/>
            <person name="Goodner B."/>
            <person name="Setubal J.C."/>
            <person name="Farrand S.K."/>
            <person name="Nester E.W."/>
            <person name="Burr T.J."/>
            <person name="Banta L."/>
            <person name="Dickerman A.W."/>
            <person name="Paulsen I."/>
            <person name="Otten L."/>
            <person name="Suen G."/>
            <person name="Welch R."/>
            <person name="Almeida N.F."/>
            <person name="Arnold F."/>
            <person name="Burton O.T."/>
            <person name="Du Z."/>
            <person name="Ewing A."/>
            <person name="Godsy E."/>
            <person name="Heisel S."/>
            <person name="Houmiel K.L."/>
            <person name="Jhaveri J."/>
            <person name="Lu J."/>
            <person name="Miller N.M."/>
            <person name="Norton S."/>
            <person name="Chen Q."/>
            <person name="Phoolcharoen W."/>
            <person name="Ohlin V."/>
            <person name="Ondrusek D."/>
            <person name="Pride N."/>
            <person name="Stricklin S.L."/>
            <person name="Sun J."/>
            <person name="Wheeler C."/>
            <person name="Wilson L."/>
            <person name="Zhu H."/>
            <person name="Wood D.W."/>
        </authorList>
    </citation>
    <scope>NUCLEOTIDE SEQUENCE [LARGE SCALE GENOMIC DNA]</scope>
    <source>
        <strain>K84 / ATCC BAA-868</strain>
    </source>
</reference>
<comment type="function">
    <text evidence="1">Catalyzes the NADPH-dependent reduction of L-glutamate 5-phosphate into L-glutamate 5-semialdehyde and phosphate. The product spontaneously undergoes cyclization to form 1-pyrroline-5-carboxylate.</text>
</comment>
<comment type="catalytic activity">
    <reaction evidence="1">
        <text>L-glutamate 5-semialdehyde + phosphate + NADP(+) = L-glutamyl 5-phosphate + NADPH + H(+)</text>
        <dbReference type="Rhea" id="RHEA:19541"/>
        <dbReference type="ChEBI" id="CHEBI:15378"/>
        <dbReference type="ChEBI" id="CHEBI:43474"/>
        <dbReference type="ChEBI" id="CHEBI:57783"/>
        <dbReference type="ChEBI" id="CHEBI:58066"/>
        <dbReference type="ChEBI" id="CHEBI:58274"/>
        <dbReference type="ChEBI" id="CHEBI:58349"/>
        <dbReference type="EC" id="1.2.1.41"/>
    </reaction>
</comment>
<comment type="pathway">
    <text evidence="1">Amino-acid biosynthesis; L-proline biosynthesis; L-glutamate 5-semialdehyde from L-glutamate: step 2/2.</text>
</comment>
<comment type="subcellular location">
    <subcellularLocation>
        <location evidence="1">Cytoplasm</location>
    </subcellularLocation>
</comment>
<comment type="similarity">
    <text evidence="1">Belongs to the gamma-glutamyl phosphate reductase family.</text>
</comment>